<feature type="chain" id="PRO_0000146446" description="Small ribosomal subunit protein uS12m">
    <location>
        <begin position="1"/>
        <end position="125"/>
    </location>
</feature>
<feature type="region of interest" description="Disordered" evidence="1">
    <location>
        <begin position="1"/>
        <end position="50"/>
    </location>
</feature>
<feature type="compositionally biased region" description="Basic and acidic residues" evidence="1">
    <location>
        <begin position="10"/>
        <end position="23"/>
    </location>
</feature>
<gene>
    <name type="primary">RPS12</name>
</gene>
<organism>
    <name type="scientific">Petunia parodii</name>
    <name type="common">Petunia</name>
    <dbReference type="NCBI Taxonomy" id="55890"/>
    <lineage>
        <taxon>Eukaryota</taxon>
        <taxon>Viridiplantae</taxon>
        <taxon>Streptophyta</taxon>
        <taxon>Embryophyta</taxon>
        <taxon>Tracheophyta</taxon>
        <taxon>Spermatophyta</taxon>
        <taxon>Magnoliopsida</taxon>
        <taxon>eudicotyledons</taxon>
        <taxon>Gunneridae</taxon>
        <taxon>Pentapetalae</taxon>
        <taxon>asterids</taxon>
        <taxon>lamiids</taxon>
        <taxon>Solanales</taxon>
        <taxon>Solanaceae</taxon>
        <taxon>Petunioideae</taxon>
        <taxon>Petunia</taxon>
    </lineage>
</organism>
<keyword id="KW-0496">Mitochondrion</keyword>
<keyword id="KW-0687">Ribonucleoprotein</keyword>
<keyword id="KW-0689">Ribosomal protein</keyword>
<sequence>MPSLNQLIRHGREEKRRTDRTRALDQCPQKQGVCPRVSTRTPKKPNSAPRKIAKVRLSNRHDIFAHIPGEGHNLQEHSMVLIRGGRVKDSPGVKSHCIRGVKDLLGIPDRRRGRSKYGAEKPKSI</sequence>
<proteinExistence type="inferred from homology"/>
<reference key="1">
    <citation type="journal article" date="1987" name="Cell">
        <title>A fused mitochondrial gene associated with cytoplasmic male sterility is developmentally regulated.</title>
        <authorList>
            <person name="Young E.G."/>
            <person name="Hanson M.R."/>
        </authorList>
    </citation>
    <scope>NUCLEOTIDE SEQUENCE [GENOMIC DNA]</scope>
    <source>
        <strain>3688</strain>
    </source>
</reference>
<reference key="2">
    <citation type="submission" date="1995-11" db="EMBL/GenBank/DDBJ databases">
        <authorList>
            <person name="Young E.G."/>
            <person name="Hanson M.R."/>
        </authorList>
    </citation>
    <scope>NUCLEOTIDE SEQUENCE [GENOMIC DNA]</scope>
    <source>
        <strain>3699</strain>
    </source>
</reference>
<dbReference type="EMBL" id="M16770">
    <property type="protein sequence ID" value="AAA96604.1"/>
    <property type="molecule type" value="Genomic_DNA"/>
</dbReference>
<dbReference type="EMBL" id="U29764">
    <property type="protein sequence ID" value="AAA80309.1"/>
    <property type="molecule type" value="Genomic_DNA"/>
</dbReference>
<dbReference type="SMR" id="P68536"/>
<dbReference type="GO" id="GO:0005739">
    <property type="term" value="C:mitochondrion"/>
    <property type="evidence" value="ECO:0007669"/>
    <property type="project" value="UniProtKB-SubCell"/>
</dbReference>
<dbReference type="GO" id="GO:0015935">
    <property type="term" value="C:small ribosomal subunit"/>
    <property type="evidence" value="ECO:0007669"/>
    <property type="project" value="InterPro"/>
</dbReference>
<dbReference type="GO" id="GO:0003735">
    <property type="term" value="F:structural constituent of ribosome"/>
    <property type="evidence" value="ECO:0007669"/>
    <property type="project" value="InterPro"/>
</dbReference>
<dbReference type="GO" id="GO:0006412">
    <property type="term" value="P:translation"/>
    <property type="evidence" value="ECO:0007669"/>
    <property type="project" value="InterPro"/>
</dbReference>
<dbReference type="CDD" id="cd03368">
    <property type="entry name" value="Ribosomal_S12"/>
    <property type="match status" value="1"/>
</dbReference>
<dbReference type="FunFam" id="2.40.50.140:FF:000099">
    <property type="entry name" value="Ribosomal protein S12, mitochondrial"/>
    <property type="match status" value="1"/>
</dbReference>
<dbReference type="Gene3D" id="2.40.50.140">
    <property type="entry name" value="Nucleic acid-binding proteins"/>
    <property type="match status" value="1"/>
</dbReference>
<dbReference type="HAMAP" id="MF_00403_B">
    <property type="entry name" value="Ribosomal_uS12_B"/>
    <property type="match status" value="1"/>
</dbReference>
<dbReference type="InterPro" id="IPR012340">
    <property type="entry name" value="NA-bd_OB-fold"/>
</dbReference>
<dbReference type="InterPro" id="IPR006032">
    <property type="entry name" value="Ribosomal_uS12"/>
</dbReference>
<dbReference type="InterPro" id="IPR005679">
    <property type="entry name" value="Ribosomal_uS12_bac"/>
</dbReference>
<dbReference type="NCBIfam" id="TIGR00981">
    <property type="entry name" value="rpsL_bact"/>
    <property type="match status" value="1"/>
</dbReference>
<dbReference type="PANTHER" id="PTHR11652">
    <property type="entry name" value="30S RIBOSOMAL PROTEIN S12 FAMILY MEMBER"/>
    <property type="match status" value="1"/>
</dbReference>
<dbReference type="Pfam" id="PF00164">
    <property type="entry name" value="Ribosom_S12_S23"/>
    <property type="match status" value="1"/>
</dbReference>
<dbReference type="PIRSF" id="PIRSF002133">
    <property type="entry name" value="Ribosomal_S12/S23"/>
    <property type="match status" value="1"/>
</dbReference>
<dbReference type="PRINTS" id="PR01034">
    <property type="entry name" value="RIBOSOMALS12"/>
</dbReference>
<dbReference type="SUPFAM" id="SSF50249">
    <property type="entry name" value="Nucleic acid-binding proteins"/>
    <property type="match status" value="1"/>
</dbReference>
<dbReference type="PROSITE" id="PS00055">
    <property type="entry name" value="RIBOSOMAL_S12"/>
    <property type="match status" value="1"/>
</dbReference>
<comment type="function">
    <text>Protein S12 is involved in the translation initiation step.</text>
</comment>
<comment type="subcellular location">
    <subcellularLocation>
        <location>Mitochondrion</location>
    </subcellularLocation>
</comment>
<comment type="similarity">
    <text evidence="2">Belongs to the universal ribosomal protein uS12 family.</text>
</comment>
<accession>P68536</accession>
<accession>P49195</accession>
<evidence type="ECO:0000256" key="1">
    <source>
        <dbReference type="SAM" id="MobiDB-lite"/>
    </source>
</evidence>
<evidence type="ECO:0000305" key="2"/>
<protein>
    <recommendedName>
        <fullName evidence="2">Small ribosomal subunit protein uS12m</fullName>
    </recommendedName>
    <alternativeName>
        <fullName>Ribosomal protein S12, mitochondrial</fullName>
    </alternativeName>
</protein>
<geneLocation type="mitochondrion"/>
<name>RT12_PETPA</name>